<protein>
    <recommendedName>
        <fullName>Manganese transporter SMF1</fullName>
    </recommendedName>
</protein>
<evidence type="ECO:0000255" key="1"/>
<evidence type="ECO:0000256" key="2">
    <source>
        <dbReference type="SAM" id="MobiDB-lite"/>
    </source>
</evidence>
<evidence type="ECO:0000269" key="3">
    <source>
    </source>
</evidence>
<evidence type="ECO:0000269" key="4">
    <source>
    </source>
</evidence>
<evidence type="ECO:0000269" key="5">
    <source>
    </source>
</evidence>
<evidence type="ECO:0000305" key="6"/>
<evidence type="ECO:0007744" key="7">
    <source>
    </source>
</evidence>
<evidence type="ECO:0007744" key="8">
    <source>
    </source>
</evidence>
<organism>
    <name type="scientific">Saccharomyces cerevisiae (strain ATCC 204508 / S288c)</name>
    <name type="common">Baker's yeast</name>
    <dbReference type="NCBI Taxonomy" id="559292"/>
    <lineage>
        <taxon>Eukaryota</taxon>
        <taxon>Fungi</taxon>
        <taxon>Dikarya</taxon>
        <taxon>Ascomycota</taxon>
        <taxon>Saccharomycotina</taxon>
        <taxon>Saccharomycetes</taxon>
        <taxon>Saccharomycetales</taxon>
        <taxon>Saccharomycetaceae</taxon>
        <taxon>Saccharomyces</taxon>
    </lineage>
</organism>
<comment type="function">
    <text evidence="3 5">High-affinity manganese transporter involved in manganese uptake from the extracellular environment. Also contributes to cellular accumulation of other divalent metal ions such as cadmium, cobalt, copper, iron and nickel.</text>
</comment>
<comment type="catalytic activity">
    <reaction evidence="5">
        <text>Mn(2+)(in) = Mn(2+)(out)</text>
        <dbReference type="Rhea" id="RHEA:28699"/>
        <dbReference type="ChEBI" id="CHEBI:29035"/>
    </reaction>
    <physiologicalReaction direction="right-to-left" evidence="6">
        <dbReference type="Rhea" id="RHEA:28701"/>
    </physiologicalReaction>
</comment>
<comment type="subcellular location">
    <subcellularLocation>
        <location evidence="4">Cell membrane</location>
        <topology evidence="1">Multi-pass membrane protein</topology>
    </subcellularLocation>
    <text>In presence of excess manganese, targeted to the vacuolar lumen, where it is degraded.</text>
</comment>
<comment type="induction">
    <text evidence="4">Up-regulated under metal starvation conditions (at protein level) (PubMed:11027260). Down-regulated after addition of manganese to the medium (at protein level) (PubMed:11027260).</text>
</comment>
<comment type="disruption phenotype">
    <text evidence="5">Decreased manganese uptake.</text>
</comment>
<comment type="similarity">
    <text evidence="6">Belongs to the NRAMP family.</text>
</comment>
<accession>P38925</accession>
<accession>D6W1U6</accession>
<sequence>MVNVGPSHAAVAVDASEARKRNISEEVFELRDKKDSTVVIEGEAPVRTFTSSSSNHEREDTYVSKRQVMRDIFAKYLKFIGPGLMVSVAYIDPGNYSTAVDAGASNQFSLLCIILLSNFIAIFLQCLCIKLGSVTGLDLSRACREYLPRWLNWTLYFFAECAVIATDIAEVIGTAIALNILIKVPLPAGVAITVVDVFLIMFTYKPGASSIRFIRIFECFVAVLVVGVCICFAIELAYIPKSTSVKQVFRGFVPSAQMFDHNGIYTAISILGATVMPHSLFLGSALVQPRLLDYDVKHGNYTVSEEQDKVKKSKSTEEIMEEKYFNYRPTNAAIKYCMKYSMVELSITLFTLALFVNCAILVVAGSTLYNSPEADGADLFTIHELLSRNLAPAAGTIFMLALLLSGQSAGVVCTMSGQIVSEGHINWKLQPWQRRLATRCISIIPCLVISICIGREALSKALNASQVVLSIVLPFLVAPLIFFTCKKSIMKTEITVDHTEEDSHNHQNNNDRSAGSVIEQDGSSGMEIENGKDVKIVYMANNWIITVIAIIVWLFLSLLNVYAIVQLGMSHGDIS</sequence>
<reference key="1">
    <citation type="journal article" date="1992" name="J. Biol. Chem.">
        <title>Two related genes encoding extremely hydrophobic proteins suppress a lethal mutation in the yeast mitochondrial processing enhancing protein.</title>
        <authorList>
            <person name="West A.H."/>
            <person name="Clark D.J."/>
            <person name="Martin J."/>
            <person name="Neupert W."/>
            <person name="Hartl F.-U."/>
            <person name="Horwich A.L."/>
        </authorList>
    </citation>
    <scope>NUCLEOTIDE SEQUENCE [GENOMIC DNA]</scope>
</reference>
<reference key="2">
    <citation type="journal article" date="1996" name="Proc. Natl. Acad. Sci. U.S.A.">
        <title>A yeast manganese transporter related to the macrophage protein involved in conferring resistance to mycobacteria.</title>
        <authorList>
            <person name="Supek F."/>
            <person name="Supekova L."/>
            <person name="Nelson H."/>
            <person name="Nelson N."/>
        </authorList>
    </citation>
    <scope>NUCLEOTIDE SEQUENCE [GENOMIC DNA]</scope>
    <source>
        <strain>ATCC 200060 / W303</strain>
    </source>
</reference>
<reference key="3">
    <citation type="journal article" date="1996" name="Yeast">
        <title>DNA sequence analysis of a 10 624 bp fragment of the left arm of chromosome XV from Saccharomyces cerevisiae reveals a RNA binding protein, a mitochondrial protein, two ribosomal proteins and two new open reading frames.</title>
        <authorList>
            <person name="Lafuente M.J."/>
            <person name="Gamo F.-J."/>
            <person name="Gancedo C."/>
        </authorList>
    </citation>
    <scope>NUCLEOTIDE SEQUENCE [GENOMIC DNA]</scope>
    <source>
        <strain>ATCC 96604 / S288c / FY1679</strain>
    </source>
</reference>
<reference key="4">
    <citation type="journal article" date="1997" name="Nature">
        <title>The nucleotide sequence of Saccharomyces cerevisiae chromosome XV.</title>
        <authorList>
            <person name="Dujon B."/>
            <person name="Albermann K."/>
            <person name="Aldea M."/>
            <person name="Alexandraki D."/>
            <person name="Ansorge W."/>
            <person name="Arino J."/>
            <person name="Benes V."/>
            <person name="Bohn C."/>
            <person name="Bolotin-Fukuhara M."/>
            <person name="Bordonne R."/>
            <person name="Boyer J."/>
            <person name="Camasses A."/>
            <person name="Casamayor A."/>
            <person name="Casas C."/>
            <person name="Cheret G."/>
            <person name="Cziepluch C."/>
            <person name="Daignan-Fornier B."/>
            <person name="Dang V.-D."/>
            <person name="de Haan M."/>
            <person name="Delius H."/>
            <person name="Durand P."/>
            <person name="Fairhead C."/>
            <person name="Feldmann H."/>
            <person name="Gaillon L."/>
            <person name="Galisson F."/>
            <person name="Gamo F.-J."/>
            <person name="Gancedo C."/>
            <person name="Goffeau A."/>
            <person name="Goulding S.E."/>
            <person name="Grivell L.A."/>
            <person name="Habbig B."/>
            <person name="Hand N.J."/>
            <person name="Hani J."/>
            <person name="Hattenhorst U."/>
            <person name="Hebling U."/>
            <person name="Hernando Y."/>
            <person name="Herrero E."/>
            <person name="Heumann K."/>
            <person name="Hiesel R."/>
            <person name="Hilger F."/>
            <person name="Hofmann B."/>
            <person name="Hollenberg C.P."/>
            <person name="Hughes B."/>
            <person name="Jauniaux J.-C."/>
            <person name="Kalogeropoulos A."/>
            <person name="Katsoulou C."/>
            <person name="Kordes E."/>
            <person name="Lafuente M.J."/>
            <person name="Landt O."/>
            <person name="Louis E.J."/>
            <person name="Maarse A.C."/>
            <person name="Madania A."/>
            <person name="Mannhaupt G."/>
            <person name="Marck C."/>
            <person name="Martin R.P."/>
            <person name="Mewes H.-W."/>
            <person name="Michaux G."/>
            <person name="Paces V."/>
            <person name="Parle-McDermott A.G."/>
            <person name="Pearson B.M."/>
            <person name="Perrin A."/>
            <person name="Pettersson B."/>
            <person name="Poch O."/>
            <person name="Pohl T.M."/>
            <person name="Poirey R."/>
            <person name="Portetelle D."/>
            <person name="Pujol A."/>
            <person name="Purnelle B."/>
            <person name="Ramezani Rad M."/>
            <person name="Rechmann S."/>
            <person name="Schwager C."/>
            <person name="Schweizer M."/>
            <person name="Sor F."/>
            <person name="Sterky F."/>
            <person name="Tarassov I.A."/>
            <person name="Teodoru C."/>
            <person name="Tettelin H."/>
            <person name="Thierry A."/>
            <person name="Tobiasch E."/>
            <person name="Tzermia M."/>
            <person name="Uhlen M."/>
            <person name="Unseld M."/>
            <person name="Valens M."/>
            <person name="Vandenbol M."/>
            <person name="Vetter I."/>
            <person name="Vlcek C."/>
            <person name="Voet M."/>
            <person name="Volckaert G."/>
            <person name="Voss H."/>
            <person name="Wambutt R."/>
            <person name="Wedler H."/>
            <person name="Wiemann S."/>
            <person name="Winsor B."/>
            <person name="Wolfe K.H."/>
            <person name="Zollner A."/>
            <person name="Zumstein E."/>
            <person name="Kleine K."/>
        </authorList>
    </citation>
    <scope>NUCLEOTIDE SEQUENCE [LARGE SCALE GENOMIC DNA]</scope>
    <source>
        <strain>ATCC 204508 / S288c</strain>
    </source>
</reference>
<reference key="5">
    <citation type="journal article" date="2014" name="G3 (Bethesda)">
        <title>The reference genome sequence of Saccharomyces cerevisiae: Then and now.</title>
        <authorList>
            <person name="Engel S.R."/>
            <person name="Dietrich F.S."/>
            <person name="Fisk D.G."/>
            <person name="Binkley G."/>
            <person name="Balakrishnan R."/>
            <person name="Costanzo M.C."/>
            <person name="Dwight S.S."/>
            <person name="Hitz B.C."/>
            <person name="Karra K."/>
            <person name="Nash R.S."/>
            <person name="Weng S."/>
            <person name="Wong E.D."/>
            <person name="Lloyd P."/>
            <person name="Skrzypek M.S."/>
            <person name="Miyasato S.R."/>
            <person name="Simison M."/>
            <person name="Cherry J.M."/>
        </authorList>
    </citation>
    <scope>GENOME REANNOTATION</scope>
    <source>
        <strain>ATCC 204508 / S288c</strain>
    </source>
</reference>
<reference key="6">
    <citation type="journal article" date="2000" name="J. Biol. Chem.">
        <title>The family of SMF metal ion transporters in yeast cells.</title>
        <authorList>
            <person name="Cohen A."/>
            <person name="Nelson H."/>
            <person name="Nelson N."/>
        </authorList>
    </citation>
    <scope>FUNCTION</scope>
</reference>
<reference key="7">
    <citation type="journal article" date="2000" name="Mol. Cell. Biol.">
        <title>Saccharomyces cerevisiae expresses three functionally distinct homologues of the nramp family of metal transporters.</title>
        <authorList>
            <person name="Portnoy M.E."/>
            <person name="Liu X.F."/>
            <person name="Culotta V.C."/>
        </authorList>
    </citation>
    <scope>SUBCELLULAR LOCATION</scope>
    <scope>INDUCTION</scope>
</reference>
<reference key="8">
    <citation type="journal article" date="2003" name="J. Biol. Chem.">
        <title>The Saccharomyces cerevisiae high affinity phosphate transporter encoded by PHO84 also functions in manganese homeostasis.</title>
        <authorList>
            <person name="Jensen L.T."/>
            <person name="Ajua-Alemanji M."/>
            <person name="Culotta V.C."/>
        </authorList>
    </citation>
    <scope>FUNCTION</scope>
    <scope>TRANSPORTER ACTIVITY</scope>
    <scope>DISRUPTION PHENOTYPE</scope>
</reference>
<reference key="9">
    <citation type="journal article" date="2005" name="Mol. Cell. Proteomics">
        <title>Quantitative phosphoproteomics applied to the yeast pheromone signaling pathway.</title>
        <authorList>
            <person name="Gruhler A."/>
            <person name="Olsen J.V."/>
            <person name="Mohammed S."/>
            <person name="Mortensen P."/>
            <person name="Faergeman N.J."/>
            <person name="Mann M."/>
            <person name="Jensen O.N."/>
        </authorList>
    </citation>
    <scope>PHOSPHORYLATION [LARGE SCALE ANALYSIS] AT SER-24</scope>
    <scope>IDENTIFICATION BY MASS SPECTROMETRY [LARGE SCALE ANALYSIS]</scope>
    <source>
        <strain>YAL6B</strain>
    </source>
</reference>
<reference key="10">
    <citation type="journal article" date="2006" name="Proc. Natl. Acad. Sci. U.S.A.">
        <title>A global topology map of the Saccharomyces cerevisiae membrane proteome.</title>
        <authorList>
            <person name="Kim H."/>
            <person name="Melen K."/>
            <person name="Oesterberg M."/>
            <person name="von Heijne G."/>
        </authorList>
    </citation>
    <scope>TOPOLOGY [LARGE SCALE ANALYSIS]</scope>
    <source>
        <strain>ATCC 208353 / W303-1A</strain>
    </source>
</reference>
<reference key="11">
    <citation type="journal article" date="2012" name="Proteomics">
        <title>Sites of ubiquitin attachment in Saccharomyces cerevisiae.</title>
        <authorList>
            <person name="Starita L.M."/>
            <person name="Lo R.S."/>
            <person name="Eng J.K."/>
            <person name="von Haller P.D."/>
            <person name="Fields S."/>
        </authorList>
    </citation>
    <scope>UBIQUITINATION [LARGE SCALE ANALYSIS] AT LYS-33 AND LYS-34</scope>
    <scope>IDENTIFICATION BY MASS SPECTROMETRY [LARGE SCALE ANALYSIS]</scope>
</reference>
<proteinExistence type="evidence at protein level"/>
<feature type="chain" id="PRO_0000212605" description="Manganese transporter SMF1">
    <location>
        <begin position="1"/>
        <end position="575"/>
    </location>
</feature>
<feature type="topological domain" description="Extracellular" evidence="1">
    <location>
        <begin position="1"/>
        <end position="70"/>
    </location>
</feature>
<feature type="transmembrane region" description="Helical" evidence="1">
    <location>
        <begin position="71"/>
        <end position="91"/>
    </location>
</feature>
<feature type="topological domain" description="Cytoplasmic" evidence="1">
    <location>
        <begin position="92"/>
        <end position="108"/>
    </location>
</feature>
<feature type="transmembrane region" description="Helical" evidence="1">
    <location>
        <begin position="109"/>
        <end position="129"/>
    </location>
</feature>
<feature type="topological domain" description="Extracellular" evidence="1">
    <location>
        <begin position="130"/>
        <end position="156"/>
    </location>
</feature>
<feature type="transmembrane region" description="Helical" evidence="1">
    <location>
        <begin position="157"/>
        <end position="177"/>
    </location>
</feature>
<feature type="topological domain" description="Cytoplasmic" evidence="1">
    <location>
        <begin position="178"/>
        <end position="179"/>
    </location>
</feature>
<feature type="transmembrane region" description="Helical" evidence="1">
    <location>
        <begin position="180"/>
        <end position="200"/>
    </location>
</feature>
<feature type="topological domain" description="Extracellular" evidence="1">
    <location>
        <begin position="201"/>
        <end position="218"/>
    </location>
</feature>
<feature type="transmembrane region" description="Helical" evidence="1">
    <location>
        <begin position="219"/>
        <end position="239"/>
    </location>
</feature>
<feature type="topological domain" description="Cytoplasmic" evidence="1">
    <location>
        <begin position="240"/>
        <end position="266"/>
    </location>
</feature>
<feature type="transmembrane region" description="Helical" evidence="1">
    <location>
        <begin position="267"/>
        <end position="287"/>
    </location>
</feature>
<feature type="topological domain" description="Extracellular" evidence="1">
    <location>
        <begin position="288"/>
        <end position="344"/>
    </location>
</feature>
<feature type="transmembrane region" description="Helical" evidence="1">
    <location>
        <begin position="345"/>
        <end position="365"/>
    </location>
</feature>
<feature type="topological domain" description="Cytoplasmic" evidence="1">
    <location>
        <begin position="366"/>
        <end position="396"/>
    </location>
</feature>
<feature type="transmembrane region" description="Helical" evidence="1">
    <location>
        <begin position="397"/>
        <end position="417"/>
    </location>
</feature>
<feature type="topological domain" description="Extracellular" evidence="1">
    <location>
        <begin position="418"/>
        <end position="463"/>
    </location>
</feature>
<feature type="transmembrane region" description="Helical" evidence="1">
    <location>
        <begin position="464"/>
        <end position="484"/>
    </location>
</feature>
<feature type="topological domain" description="Cytoplasmic" evidence="1">
    <location>
        <begin position="485"/>
        <end position="543"/>
    </location>
</feature>
<feature type="transmembrane region" description="Helical" evidence="1">
    <location>
        <begin position="544"/>
        <end position="564"/>
    </location>
</feature>
<feature type="topological domain" description="Extracellular" evidence="1">
    <location>
        <begin position="565"/>
        <end position="575"/>
    </location>
</feature>
<feature type="region of interest" description="Disordered" evidence="2">
    <location>
        <begin position="498"/>
        <end position="517"/>
    </location>
</feature>
<feature type="modified residue" description="Phosphoserine" evidence="7">
    <location>
        <position position="24"/>
    </location>
</feature>
<feature type="cross-link" description="Glycyl lysine isopeptide (Lys-Gly) (interchain with G-Cter in ubiquitin)" evidence="8">
    <location>
        <position position="33"/>
    </location>
</feature>
<feature type="cross-link" description="Glycyl lysine isopeptide (Lys-Gly) (interchain with G-Cter in ubiquitin)" evidence="8">
    <location>
        <position position="34"/>
    </location>
</feature>
<feature type="sequence conflict" description="In Ref. 1." evidence="6" ref="1">
    <original>E</original>
    <variation>D</variation>
    <location>
        <position position="305"/>
    </location>
</feature>
<feature type="sequence conflict" description="In Ref. 1." evidence="6" ref="1">
    <original>S</original>
    <variation>A</variation>
    <location>
        <position position="416"/>
    </location>
</feature>
<keyword id="KW-1003">Cell membrane</keyword>
<keyword id="KW-1017">Isopeptide bond</keyword>
<keyword id="KW-0464">Manganese</keyword>
<keyword id="KW-0472">Membrane</keyword>
<keyword id="KW-0479">Metal-binding</keyword>
<keyword id="KW-0597">Phosphoprotein</keyword>
<keyword id="KW-1185">Reference proteome</keyword>
<keyword id="KW-0812">Transmembrane</keyword>
<keyword id="KW-1133">Transmembrane helix</keyword>
<keyword id="KW-0813">Transport</keyword>
<keyword id="KW-0832">Ubl conjugation</keyword>
<dbReference type="EMBL" id="U15929">
    <property type="protein sequence ID" value="AAB48984.1"/>
    <property type="molecule type" value="Genomic_DNA"/>
</dbReference>
<dbReference type="EMBL" id="X95258">
    <property type="protein sequence ID" value="CAA64547.1"/>
    <property type="molecule type" value="Genomic_DNA"/>
</dbReference>
<dbReference type="EMBL" id="Z74864">
    <property type="protein sequence ID" value="CAA99141.1"/>
    <property type="molecule type" value="Genomic_DNA"/>
</dbReference>
<dbReference type="EMBL" id="BK006948">
    <property type="protein sequence ID" value="DAA10662.1"/>
    <property type="molecule type" value="Genomic_DNA"/>
</dbReference>
<dbReference type="PIR" id="S58647">
    <property type="entry name" value="S58647"/>
</dbReference>
<dbReference type="RefSeq" id="NP_014519.1">
    <property type="nucleotide sequence ID" value="NM_001183376.1"/>
</dbReference>
<dbReference type="SMR" id="P38925"/>
<dbReference type="BioGRID" id="34279">
    <property type="interactions" value="71"/>
</dbReference>
<dbReference type="FunCoup" id="P38925">
    <property type="interactions" value="354"/>
</dbReference>
<dbReference type="IntAct" id="P38925">
    <property type="interactions" value="4"/>
</dbReference>
<dbReference type="MINT" id="P38925"/>
<dbReference type="STRING" id="4932.YOL122C"/>
<dbReference type="TCDB" id="2.A.55.1.1">
    <property type="family name" value="the metal ion (mn(2+)-iron) transporter (nramp) family"/>
</dbReference>
<dbReference type="iPTMnet" id="P38925"/>
<dbReference type="PaxDb" id="4932-YOL122C"/>
<dbReference type="PeptideAtlas" id="P38925"/>
<dbReference type="TopDownProteomics" id="P38925"/>
<dbReference type="EnsemblFungi" id="YOL122C_mRNA">
    <property type="protein sequence ID" value="YOL122C"/>
    <property type="gene ID" value="YOL122C"/>
</dbReference>
<dbReference type="GeneID" id="854027"/>
<dbReference type="KEGG" id="sce:YOL122C"/>
<dbReference type="AGR" id="SGD:S000005482"/>
<dbReference type="SGD" id="S000005482">
    <property type="gene designation" value="SMF1"/>
</dbReference>
<dbReference type="VEuPathDB" id="FungiDB:YOL122C"/>
<dbReference type="eggNOG" id="KOG1291">
    <property type="taxonomic scope" value="Eukaryota"/>
</dbReference>
<dbReference type="HOGENOM" id="CLU_020088_4_1_1"/>
<dbReference type="InParanoid" id="P38925"/>
<dbReference type="OMA" id="YEYYPRT"/>
<dbReference type="OrthoDB" id="409173at2759"/>
<dbReference type="BioCyc" id="YEAST:G3O-33518-MONOMER"/>
<dbReference type="BioGRID-ORCS" id="854027">
    <property type="hits" value="3 hits in 10 CRISPR screens"/>
</dbReference>
<dbReference type="PRO" id="PR:P38925"/>
<dbReference type="Proteomes" id="UP000002311">
    <property type="component" value="Chromosome XV"/>
</dbReference>
<dbReference type="RNAct" id="P38925">
    <property type="molecule type" value="protein"/>
</dbReference>
<dbReference type="GO" id="GO:0000324">
    <property type="term" value="C:fungal-type vacuole"/>
    <property type="evidence" value="ECO:0007005"/>
    <property type="project" value="SGD"/>
</dbReference>
<dbReference type="GO" id="GO:0005886">
    <property type="term" value="C:plasma membrane"/>
    <property type="evidence" value="ECO:0000314"/>
    <property type="project" value="SGD"/>
</dbReference>
<dbReference type="GO" id="GO:0015086">
    <property type="term" value="F:cadmium ion transmembrane transporter activity"/>
    <property type="evidence" value="ECO:0000318"/>
    <property type="project" value="GO_Central"/>
</dbReference>
<dbReference type="GO" id="GO:0022890">
    <property type="term" value="F:inorganic cation transmembrane transporter activity"/>
    <property type="evidence" value="ECO:0000314"/>
    <property type="project" value="SGD"/>
</dbReference>
<dbReference type="GO" id="GO:0005384">
    <property type="term" value="F:manganese ion transmembrane transporter activity"/>
    <property type="evidence" value="ECO:0000318"/>
    <property type="project" value="GO_Central"/>
</dbReference>
<dbReference type="GO" id="GO:0046872">
    <property type="term" value="F:metal ion binding"/>
    <property type="evidence" value="ECO:0007669"/>
    <property type="project" value="UniProtKB-KW"/>
</dbReference>
<dbReference type="GO" id="GO:0015295">
    <property type="term" value="F:solute:proton symporter activity"/>
    <property type="evidence" value="ECO:0000314"/>
    <property type="project" value="SGD"/>
</dbReference>
<dbReference type="GO" id="GO:0015691">
    <property type="term" value="P:cadmium ion transport"/>
    <property type="evidence" value="ECO:0000316"/>
    <property type="project" value="SGD"/>
</dbReference>
<dbReference type="GO" id="GO:0006825">
    <property type="term" value="P:copper ion transport"/>
    <property type="evidence" value="ECO:0000316"/>
    <property type="project" value="SGD"/>
</dbReference>
<dbReference type="GO" id="GO:0006878">
    <property type="term" value="P:intracellular copper ion homeostasis"/>
    <property type="evidence" value="ECO:0000316"/>
    <property type="project" value="SGD"/>
</dbReference>
<dbReference type="GO" id="GO:0030026">
    <property type="term" value="P:intracellular manganese ion homeostasis"/>
    <property type="evidence" value="ECO:0000315"/>
    <property type="project" value="SGD"/>
</dbReference>
<dbReference type="GO" id="GO:0034755">
    <property type="term" value="P:iron ion transmembrane transport"/>
    <property type="evidence" value="ECO:0000318"/>
    <property type="project" value="GO_Central"/>
</dbReference>
<dbReference type="GO" id="GO:0006826">
    <property type="term" value="P:iron ion transport"/>
    <property type="evidence" value="ECO:0000316"/>
    <property type="project" value="SGD"/>
</dbReference>
<dbReference type="GO" id="GO:0006828">
    <property type="term" value="P:manganese ion transport"/>
    <property type="evidence" value="ECO:0000315"/>
    <property type="project" value="SGD"/>
</dbReference>
<dbReference type="HAMAP" id="MF_00221">
    <property type="entry name" value="NRAMP"/>
    <property type="match status" value="1"/>
</dbReference>
<dbReference type="InterPro" id="IPR001046">
    <property type="entry name" value="NRAMP_fam"/>
</dbReference>
<dbReference type="NCBIfam" id="TIGR01197">
    <property type="entry name" value="nramp"/>
    <property type="match status" value="1"/>
</dbReference>
<dbReference type="NCBIfam" id="NF037982">
    <property type="entry name" value="Nramp_1"/>
    <property type="match status" value="1"/>
</dbReference>
<dbReference type="PANTHER" id="PTHR11706:SF101">
    <property type="entry name" value="MANGANESE TRANSPORTER SMF1"/>
    <property type="match status" value="1"/>
</dbReference>
<dbReference type="PANTHER" id="PTHR11706">
    <property type="entry name" value="SOLUTE CARRIER PROTEIN FAMILY 11 MEMBER"/>
    <property type="match status" value="1"/>
</dbReference>
<dbReference type="Pfam" id="PF01566">
    <property type="entry name" value="Nramp"/>
    <property type="match status" value="1"/>
</dbReference>
<dbReference type="PRINTS" id="PR00447">
    <property type="entry name" value="NATRESASSCMP"/>
</dbReference>
<gene>
    <name type="primary">SMF1</name>
    <name type="synonym">ESP1</name>
    <name type="ordered locus">YOL122C</name>
</gene>
<name>SMF1_YEAST</name>